<comment type="function">
    <text evidence="1">Binds directly to 23S rRNA. The L1 stalk is quite mobile in the ribosome, and is involved in E site tRNA release.</text>
</comment>
<comment type="function">
    <text evidence="1">Protein L1 is also a translational repressor protein, it controls the translation of the L11 operon by binding to its mRNA.</text>
</comment>
<comment type="subunit">
    <text evidence="1">Part of the 50S ribosomal subunit.</text>
</comment>
<comment type="similarity">
    <text evidence="1">Belongs to the universal ribosomal protein uL1 family.</text>
</comment>
<proteinExistence type="inferred from homology"/>
<reference key="1">
    <citation type="journal article" date="2008" name="J. Biotechnol.">
        <title>Ultrafast pyrosequencing of Corynebacterium kroppenstedtii DSM44385 revealed insights into the physiology of a lipophilic corynebacterium that lacks mycolic acids.</title>
        <authorList>
            <person name="Tauch A."/>
            <person name="Schneider J."/>
            <person name="Szczepanowski R."/>
            <person name="Tilker A."/>
            <person name="Viehoever P."/>
            <person name="Gartemann K.-H."/>
            <person name="Arnold W."/>
            <person name="Blom J."/>
            <person name="Brinkrolf K."/>
            <person name="Brune I."/>
            <person name="Goetker S."/>
            <person name="Weisshaar B."/>
            <person name="Goesmann A."/>
            <person name="Droege M."/>
            <person name="Puehler A."/>
        </authorList>
    </citation>
    <scope>NUCLEOTIDE SEQUENCE [LARGE SCALE GENOMIC DNA]</scope>
    <source>
        <strain>DSM 44385 / JCM 11950 / CIP 105744 / CCUG 35717</strain>
    </source>
</reference>
<name>RL1_CORK4</name>
<evidence type="ECO:0000255" key="1">
    <source>
        <dbReference type="HAMAP-Rule" id="MF_01318"/>
    </source>
</evidence>
<evidence type="ECO:0000305" key="2"/>
<protein>
    <recommendedName>
        <fullName evidence="1">Large ribosomal subunit protein uL1</fullName>
    </recommendedName>
    <alternativeName>
        <fullName evidence="2">50S ribosomal protein L1</fullName>
    </alternativeName>
</protein>
<accession>C4LL88</accession>
<feature type="chain" id="PRO_1000214414" description="Large ribosomal subunit protein uL1">
    <location>
        <begin position="1"/>
        <end position="237"/>
    </location>
</feature>
<gene>
    <name evidence="1" type="primary">rplA</name>
    <name type="ordered locus">ckrop_1878</name>
</gene>
<keyword id="KW-1185">Reference proteome</keyword>
<keyword id="KW-0678">Repressor</keyword>
<keyword id="KW-0687">Ribonucleoprotein</keyword>
<keyword id="KW-0689">Ribosomal protein</keyword>
<keyword id="KW-0694">RNA-binding</keyword>
<keyword id="KW-0699">rRNA-binding</keyword>
<keyword id="KW-0810">Translation regulation</keyword>
<keyword id="KW-0820">tRNA-binding</keyword>
<organism>
    <name type="scientific">Corynebacterium kroppenstedtii (strain DSM 44385 / JCM 11950 / CIP 105744 / CCUG 35717)</name>
    <dbReference type="NCBI Taxonomy" id="645127"/>
    <lineage>
        <taxon>Bacteria</taxon>
        <taxon>Bacillati</taxon>
        <taxon>Actinomycetota</taxon>
        <taxon>Actinomycetes</taxon>
        <taxon>Mycobacteriales</taxon>
        <taxon>Corynebacteriaceae</taxon>
        <taxon>Corynebacterium</taxon>
    </lineage>
</organism>
<dbReference type="EMBL" id="CP001620">
    <property type="protein sequence ID" value="ACR18593.1"/>
    <property type="molecule type" value="Genomic_DNA"/>
</dbReference>
<dbReference type="RefSeq" id="WP_012732480.1">
    <property type="nucleotide sequence ID" value="NC_012704.1"/>
</dbReference>
<dbReference type="SMR" id="C4LL88"/>
<dbReference type="STRING" id="645127.ckrop_1878"/>
<dbReference type="GeneID" id="92726669"/>
<dbReference type="KEGG" id="ckp:ckrop_1878"/>
<dbReference type="eggNOG" id="COG0081">
    <property type="taxonomic scope" value="Bacteria"/>
</dbReference>
<dbReference type="HOGENOM" id="CLU_062853_0_0_11"/>
<dbReference type="OrthoDB" id="9803740at2"/>
<dbReference type="Proteomes" id="UP000001473">
    <property type="component" value="Chromosome"/>
</dbReference>
<dbReference type="GO" id="GO:0015934">
    <property type="term" value="C:large ribosomal subunit"/>
    <property type="evidence" value="ECO:0007669"/>
    <property type="project" value="InterPro"/>
</dbReference>
<dbReference type="GO" id="GO:0019843">
    <property type="term" value="F:rRNA binding"/>
    <property type="evidence" value="ECO:0007669"/>
    <property type="project" value="UniProtKB-UniRule"/>
</dbReference>
<dbReference type="GO" id="GO:0003735">
    <property type="term" value="F:structural constituent of ribosome"/>
    <property type="evidence" value="ECO:0007669"/>
    <property type="project" value="InterPro"/>
</dbReference>
<dbReference type="GO" id="GO:0000049">
    <property type="term" value="F:tRNA binding"/>
    <property type="evidence" value="ECO:0007669"/>
    <property type="project" value="UniProtKB-KW"/>
</dbReference>
<dbReference type="GO" id="GO:0006417">
    <property type="term" value="P:regulation of translation"/>
    <property type="evidence" value="ECO:0007669"/>
    <property type="project" value="UniProtKB-KW"/>
</dbReference>
<dbReference type="GO" id="GO:0006412">
    <property type="term" value="P:translation"/>
    <property type="evidence" value="ECO:0007669"/>
    <property type="project" value="UniProtKB-UniRule"/>
</dbReference>
<dbReference type="CDD" id="cd00403">
    <property type="entry name" value="Ribosomal_L1"/>
    <property type="match status" value="1"/>
</dbReference>
<dbReference type="FunFam" id="3.40.50.790:FF:000001">
    <property type="entry name" value="50S ribosomal protein L1"/>
    <property type="match status" value="1"/>
</dbReference>
<dbReference type="Gene3D" id="3.30.190.20">
    <property type="match status" value="1"/>
</dbReference>
<dbReference type="Gene3D" id="3.40.50.790">
    <property type="match status" value="1"/>
</dbReference>
<dbReference type="HAMAP" id="MF_01318_B">
    <property type="entry name" value="Ribosomal_uL1_B"/>
    <property type="match status" value="1"/>
</dbReference>
<dbReference type="InterPro" id="IPR005878">
    <property type="entry name" value="Ribosom_uL1_bac-type"/>
</dbReference>
<dbReference type="InterPro" id="IPR002143">
    <property type="entry name" value="Ribosomal_uL1"/>
</dbReference>
<dbReference type="InterPro" id="IPR023674">
    <property type="entry name" value="Ribosomal_uL1-like"/>
</dbReference>
<dbReference type="InterPro" id="IPR028364">
    <property type="entry name" value="Ribosomal_uL1/biogenesis"/>
</dbReference>
<dbReference type="InterPro" id="IPR016095">
    <property type="entry name" value="Ribosomal_uL1_3-a/b-sand"/>
</dbReference>
<dbReference type="InterPro" id="IPR023673">
    <property type="entry name" value="Ribosomal_uL1_CS"/>
</dbReference>
<dbReference type="NCBIfam" id="TIGR01169">
    <property type="entry name" value="rplA_bact"/>
    <property type="match status" value="1"/>
</dbReference>
<dbReference type="PANTHER" id="PTHR36427">
    <property type="entry name" value="54S RIBOSOMAL PROTEIN L1, MITOCHONDRIAL"/>
    <property type="match status" value="1"/>
</dbReference>
<dbReference type="PANTHER" id="PTHR36427:SF3">
    <property type="entry name" value="LARGE RIBOSOMAL SUBUNIT PROTEIN UL1M"/>
    <property type="match status" value="1"/>
</dbReference>
<dbReference type="Pfam" id="PF00687">
    <property type="entry name" value="Ribosomal_L1"/>
    <property type="match status" value="1"/>
</dbReference>
<dbReference type="PIRSF" id="PIRSF002155">
    <property type="entry name" value="Ribosomal_L1"/>
    <property type="match status" value="1"/>
</dbReference>
<dbReference type="SUPFAM" id="SSF56808">
    <property type="entry name" value="Ribosomal protein L1"/>
    <property type="match status" value="1"/>
</dbReference>
<dbReference type="PROSITE" id="PS01199">
    <property type="entry name" value="RIBOSOMAL_L1"/>
    <property type="match status" value="1"/>
</dbReference>
<sequence length="237" mass="25003">MSKNSKAYKAALEKIDAGRIYAPIDAMKTVKETAYSSYDPTVDVAIRLGVDPRKADQLVRGTVSLPNGTGKEVRVVVFAEGPNATAAEEAGADVVGTAELVERIQGGWTDFDAAIATPDQMAKVGRVARVLGPRGLMPNPKTGTVTTDVTKAVKEIKGGKISFRVDKAANLHAVLGKASFSAEQLAENYGALIDELLRVKPSAAKGRYLKKVTVSCTNGPAVPVDNTVVKNYTGEAE</sequence>